<organism>
    <name type="scientific">Influenza C virus (strain C/Great lakes/1167/1954)</name>
    <dbReference type="NCBI Taxonomy" id="11557"/>
    <lineage>
        <taxon>Viruses</taxon>
        <taxon>Riboviria</taxon>
        <taxon>Orthornavirae</taxon>
        <taxon>Negarnaviricota</taxon>
        <taxon>Polyploviricotina</taxon>
        <taxon>Insthoviricetes</taxon>
        <taxon>Articulavirales</taxon>
        <taxon>Orthomyxoviridae</taxon>
        <taxon>Gammainfluenzavirus</taxon>
        <taxon>Gammainfluenzavirus influenzae</taxon>
        <taxon>Influenza C virus</taxon>
    </lineage>
</organism>
<organismHost>
    <name type="scientific">Homo sapiens</name>
    <name type="common">Human</name>
    <dbReference type="NCBI Taxonomy" id="9606"/>
</organismHost>
<organismHost>
    <name type="scientific">Sus scrofa</name>
    <name type="common">Pig</name>
    <dbReference type="NCBI Taxonomy" id="9823"/>
</organismHost>
<gene>
    <name type="primary">NS</name>
</gene>
<comment type="function">
    <text evidence="1">Suppresses the RNA silencing-based antiviral response in Drosophila cells.</text>
</comment>
<comment type="subcellular location">
    <subcellularLocation>
        <location evidence="1">Host cytoplasm</location>
    </subcellularLocation>
    <subcellularLocation>
        <location evidence="1">Host nucleus</location>
    </subcellularLocation>
</comment>
<comment type="alternative products">
    <event type="alternative splicing"/>
    <isoform>
        <id>P0C134-1</id>
        <name>NS1</name>
        <sequence type="displayed"/>
    </isoform>
    <isoform>
        <id>P0C135-1</id>
        <name>NEP</name>
        <name>NS2</name>
        <sequence type="external"/>
    </isoform>
</comment>
<comment type="sequence caution" evidence="2">
    <conflict type="frameshift">
        <sequence resource="EMBL-CDS" id="AAA43803"/>
    </conflict>
</comment>
<sequence>VKSTNLMAFVATKMLERQEDLDTCTEMQVEKMKTSTKARLRTESSFAPRTWEDAIKDGELLFNGTILQAESPTMTPASVEMKGKKFPIDFAPSNIAPIGQNPIYLSPCIPNFDGNVWEATMYHHRGATLTKTMNCNCFQRTIWCHPNSSRMRLSYAFVLYCRNTKKICGYLIARQVAGIETGIRKCFRCIKSGFVMATDEISLTILQSIKSGAQLDPYWGNETPDIDKTEAYMLSLRETGP</sequence>
<keyword id="KW-0025">Alternative splicing</keyword>
<keyword id="KW-1035">Host cytoplasm</keyword>
<keyword id="KW-1048">Host nucleus</keyword>
<protein>
    <recommendedName>
        <fullName>Non-structural protein 1</fullName>
        <shortName>NS1</shortName>
    </recommendedName>
    <alternativeName>
        <fullName>NS1C</fullName>
    </alternativeName>
</protein>
<accession>P0C134</accession>
<accession>P06822</accession>
<accession>Q84088</accession>
<accession>Q89422</accession>
<name>NS1_INCGL</name>
<reference key="1">
    <citation type="journal article" date="1986" name="Virology">
        <title>Epidemiology of influenza C virus in man: multiple evolutionary lineages and low rate of change.</title>
        <authorList>
            <person name="Buonagurio D.A."/>
            <person name="Nakada S."/>
            <person name="Fitch W.M."/>
            <person name="Palese P."/>
        </authorList>
    </citation>
    <scope>NUCLEOTIDE SEQUENCE [GENOMIC RNA]</scope>
</reference>
<reference key="2">
    <citation type="journal article" date="2000" name="J. Gen. Virol.">
        <title>Phylogenetic analysis of influenza C virus nonstructural (NS) protein genes and identification of the NS2 protein.</title>
        <authorList>
            <person name="Alamgir A.S.M."/>
            <person name="Matsuzaki Y."/>
            <person name="Hongo S."/>
            <person name="Tsuchiya E."/>
            <person name="Sugawara K."/>
            <person name="Muraki Y."/>
            <person name="Nakamura K."/>
        </authorList>
    </citation>
    <scope>IDENTIFICATION OF FRAMESHIFT</scope>
</reference>
<evidence type="ECO:0000250" key="1"/>
<evidence type="ECO:0000305" key="2"/>
<dbReference type="EMBL" id="D00030">
    <property type="protein sequence ID" value="BAA24036.1"/>
    <property type="status" value="ALT_FRAME"/>
    <property type="molecule type" value="Genomic_RNA"/>
</dbReference>
<dbReference type="EMBL" id="M15089">
    <property type="protein sequence ID" value="AAA43803.1"/>
    <property type="status" value="ALT_FRAME"/>
    <property type="molecule type" value="Genomic_RNA"/>
</dbReference>
<dbReference type="GO" id="GO:0030430">
    <property type="term" value="C:host cell cytoplasm"/>
    <property type="evidence" value="ECO:0007669"/>
    <property type="project" value="UniProtKB-SubCell"/>
</dbReference>
<dbReference type="GO" id="GO:0042025">
    <property type="term" value="C:host cell nucleus"/>
    <property type="evidence" value="ECO:0007669"/>
    <property type="project" value="UniProtKB-SubCell"/>
</dbReference>
<dbReference type="InterPro" id="IPR005187">
    <property type="entry name" value="Flu_C_NS1"/>
</dbReference>
<dbReference type="InterPro" id="IPR005188">
    <property type="entry name" value="Flu_C_NS2"/>
</dbReference>
<dbReference type="Pfam" id="PF03506">
    <property type="entry name" value="Flu_C_NS1"/>
    <property type="match status" value="1"/>
</dbReference>
<dbReference type="Pfam" id="PF03555">
    <property type="entry name" value="Flu_C_NS2"/>
    <property type="match status" value="1"/>
</dbReference>
<proteinExistence type="inferred from homology"/>
<feature type="chain" id="PRO_0000039176" description="Non-structural protein 1">
    <location>
        <begin position="1"/>
        <end position="241"/>
    </location>
</feature>
<feature type="non-terminal residue">
    <location>
        <position position="1"/>
    </location>
</feature>